<gene>
    <name type="primary">TRAF5</name>
    <name type="synonym">RNF84</name>
</gene>
<sequence length="557" mass="64406">MAYSEEHKGMPCGFIRQNSGNSISLDFEPSIEYQFVERLEERYKCAFCHSVLHNPHQTGCGHRFCQHCILSLRELNTVPICPVDKEVIKSQEVFKDNCCKREVLNLYVYCSNAPGCNAKVILGRYQDHLQQCLFQPVQCSNEKCREPVLRKDLKEHLSASCQFRKEKCLYCKKDVVVINLQNHEENLCPEYPVFCPNNCAKIILKTEVDEHLAVCPEAEQDCPFKHYGCAVTDKRRNLQQHEHSALREHMRLVLEKNVQLEEQISDLHKSLEQKESKIQQLAETIKKLEKEFKQFAQLFGKNGSFLPNIQVFASHIDKSAWLEAQVHQLLQMVNQQQNKFDLRPLMEAVDTVKQKITLLENNDQRLAVLEEETNKHDTHINIHKAQLSKNEERFKLLEGTCYNGKLIWKVTDYKMKKREAVDGHTVSIFSQSFYTSRCGYRLCARAYLNGDGSGRGSHLSLYFVVMRGEFDSLLQWPFRQRVTLMLLDQSGKKNIMETFKPDPNSSSFKRPDGEMNIASGCPRFVAHSVLENAKNAYIKDDTLFLKVAVDLTDLEDL</sequence>
<reference key="1">
    <citation type="journal article" date="1998" name="Gene">
        <title>Cloning and characterization of a cDNA encoding the human homolog of tumor necrosis factor receptor-associated factor 5 (TRAF5).</title>
        <authorList>
            <person name="Mizushima S."/>
            <person name="Fujita M."/>
            <person name="Ishida T."/>
            <person name="Azuma S."/>
            <person name="Kato K."/>
            <person name="Hirai M."/>
            <person name="Otsuka M."/>
            <person name="Yamamoto T."/>
            <person name="Inoue J."/>
        </authorList>
    </citation>
    <scope>NUCLEOTIDE SEQUENCE [MRNA] (ISOFORM 1)</scope>
    <scope>INTERACTION WITH TNFRSF5; TNFRSF8 AND LTBR</scope>
</reference>
<reference key="2">
    <citation type="journal article" date="2004" name="Nat. Genet.">
        <title>Complete sequencing and characterization of 21,243 full-length human cDNAs.</title>
        <authorList>
            <person name="Ota T."/>
            <person name="Suzuki Y."/>
            <person name="Nishikawa T."/>
            <person name="Otsuki T."/>
            <person name="Sugiyama T."/>
            <person name="Irie R."/>
            <person name="Wakamatsu A."/>
            <person name="Hayashi K."/>
            <person name="Sato H."/>
            <person name="Nagai K."/>
            <person name="Kimura K."/>
            <person name="Makita H."/>
            <person name="Sekine M."/>
            <person name="Obayashi M."/>
            <person name="Nishi T."/>
            <person name="Shibahara T."/>
            <person name="Tanaka T."/>
            <person name="Ishii S."/>
            <person name="Yamamoto J."/>
            <person name="Saito K."/>
            <person name="Kawai Y."/>
            <person name="Isono Y."/>
            <person name="Nakamura Y."/>
            <person name="Nagahari K."/>
            <person name="Murakami K."/>
            <person name="Yasuda T."/>
            <person name="Iwayanagi T."/>
            <person name="Wagatsuma M."/>
            <person name="Shiratori A."/>
            <person name="Sudo H."/>
            <person name="Hosoiri T."/>
            <person name="Kaku Y."/>
            <person name="Kodaira H."/>
            <person name="Kondo H."/>
            <person name="Sugawara M."/>
            <person name="Takahashi M."/>
            <person name="Kanda K."/>
            <person name="Yokoi T."/>
            <person name="Furuya T."/>
            <person name="Kikkawa E."/>
            <person name="Omura Y."/>
            <person name="Abe K."/>
            <person name="Kamihara K."/>
            <person name="Katsuta N."/>
            <person name="Sato K."/>
            <person name="Tanikawa M."/>
            <person name="Yamazaki M."/>
            <person name="Ninomiya K."/>
            <person name="Ishibashi T."/>
            <person name="Yamashita H."/>
            <person name="Murakawa K."/>
            <person name="Fujimori K."/>
            <person name="Tanai H."/>
            <person name="Kimata M."/>
            <person name="Watanabe M."/>
            <person name="Hiraoka S."/>
            <person name="Chiba Y."/>
            <person name="Ishida S."/>
            <person name="Ono Y."/>
            <person name="Takiguchi S."/>
            <person name="Watanabe S."/>
            <person name="Yosida M."/>
            <person name="Hotuta T."/>
            <person name="Kusano J."/>
            <person name="Kanehori K."/>
            <person name="Takahashi-Fujii A."/>
            <person name="Hara H."/>
            <person name="Tanase T.-O."/>
            <person name="Nomura Y."/>
            <person name="Togiya S."/>
            <person name="Komai F."/>
            <person name="Hara R."/>
            <person name="Takeuchi K."/>
            <person name="Arita M."/>
            <person name="Imose N."/>
            <person name="Musashino K."/>
            <person name="Yuuki H."/>
            <person name="Oshima A."/>
            <person name="Sasaki N."/>
            <person name="Aotsuka S."/>
            <person name="Yoshikawa Y."/>
            <person name="Matsunawa H."/>
            <person name="Ichihara T."/>
            <person name="Shiohata N."/>
            <person name="Sano S."/>
            <person name="Moriya S."/>
            <person name="Momiyama H."/>
            <person name="Satoh N."/>
            <person name="Takami S."/>
            <person name="Terashima Y."/>
            <person name="Suzuki O."/>
            <person name="Nakagawa S."/>
            <person name="Senoh A."/>
            <person name="Mizoguchi H."/>
            <person name="Goto Y."/>
            <person name="Shimizu F."/>
            <person name="Wakebe H."/>
            <person name="Hishigaki H."/>
            <person name="Watanabe T."/>
            <person name="Sugiyama A."/>
            <person name="Takemoto M."/>
            <person name="Kawakami B."/>
            <person name="Yamazaki M."/>
            <person name="Watanabe K."/>
            <person name="Kumagai A."/>
            <person name="Itakura S."/>
            <person name="Fukuzumi Y."/>
            <person name="Fujimori Y."/>
            <person name="Komiyama M."/>
            <person name="Tashiro H."/>
            <person name="Tanigami A."/>
            <person name="Fujiwara T."/>
            <person name="Ono T."/>
            <person name="Yamada K."/>
            <person name="Fujii Y."/>
            <person name="Ozaki K."/>
            <person name="Hirao M."/>
            <person name="Ohmori Y."/>
            <person name="Kawabata A."/>
            <person name="Hikiji T."/>
            <person name="Kobatake N."/>
            <person name="Inagaki H."/>
            <person name="Ikema Y."/>
            <person name="Okamoto S."/>
            <person name="Okitani R."/>
            <person name="Kawakami T."/>
            <person name="Noguchi S."/>
            <person name="Itoh T."/>
            <person name="Shigeta K."/>
            <person name="Senba T."/>
            <person name="Matsumura K."/>
            <person name="Nakajima Y."/>
            <person name="Mizuno T."/>
            <person name="Morinaga M."/>
            <person name="Sasaki M."/>
            <person name="Togashi T."/>
            <person name="Oyama M."/>
            <person name="Hata H."/>
            <person name="Watanabe M."/>
            <person name="Komatsu T."/>
            <person name="Mizushima-Sugano J."/>
            <person name="Satoh T."/>
            <person name="Shirai Y."/>
            <person name="Takahashi Y."/>
            <person name="Nakagawa K."/>
            <person name="Okumura K."/>
            <person name="Nagase T."/>
            <person name="Nomura N."/>
            <person name="Kikuchi H."/>
            <person name="Masuho Y."/>
            <person name="Yamashita R."/>
            <person name="Nakai K."/>
            <person name="Yada T."/>
            <person name="Nakamura Y."/>
            <person name="Ohara O."/>
            <person name="Isogai T."/>
            <person name="Sugano S."/>
        </authorList>
    </citation>
    <scope>NUCLEOTIDE SEQUENCE [LARGE SCALE MRNA] (ISOFORMS 2 AND 3)</scope>
    <scope>VARIANT TYR-268</scope>
    <source>
        <tissue>Hippocampus</tissue>
        <tissue>Thymus</tissue>
    </source>
</reference>
<reference key="3">
    <citation type="submission" date="2004-06" db="EMBL/GenBank/DDBJ databases">
        <title>Cloning of human full open reading frames in Gateway(TM) system entry vector (pDONR201).</title>
        <authorList>
            <person name="Ebert L."/>
            <person name="Schick M."/>
            <person name="Neubert P."/>
            <person name="Schatten R."/>
            <person name="Henze S."/>
            <person name="Korn B."/>
        </authorList>
    </citation>
    <scope>NUCLEOTIDE SEQUENCE [LARGE SCALE MRNA] (ISOFORM 1)</scope>
</reference>
<reference key="4">
    <citation type="journal article" date="2006" name="Nature">
        <title>The DNA sequence and biological annotation of human chromosome 1.</title>
        <authorList>
            <person name="Gregory S.G."/>
            <person name="Barlow K.F."/>
            <person name="McLay K.E."/>
            <person name="Kaul R."/>
            <person name="Swarbreck D."/>
            <person name="Dunham A."/>
            <person name="Scott C.E."/>
            <person name="Howe K.L."/>
            <person name="Woodfine K."/>
            <person name="Spencer C.C.A."/>
            <person name="Jones M.C."/>
            <person name="Gillson C."/>
            <person name="Searle S."/>
            <person name="Zhou Y."/>
            <person name="Kokocinski F."/>
            <person name="McDonald L."/>
            <person name="Evans R."/>
            <person name="Phillips K."/>
            <person name="Atkinson A."/>
            <person name="Cooper R."/>
            <person name="Jones C."/>
            <person name="Hall R.E."/>
            <person name="Andrews T.D."/>
            <person name="Lloyd C."/>
            <person name="Ainscough R."/>
            <person name="Almeida J.P."/>
            <person name="Ambrose K.D."/>
            <person name="Anderson F."/>
            <person name="Andrew R.W."/>
            <person name="Ashwell R.I.S."/>
            <person name="Aubin K."/>
            <person name="Babbage A.K."/>
            <person name="Bagguley C.L."/>
            <person name="Bailey J."/>
            <person name="Beasley H."/>
            <person name="Bethel G."/>
            <person name="Bird C.P."/>
            <person name="Bray-Allen S."/>
            <person name="Brown J.Y."/>
            <person name="Brown A.J."/>
            <person name="Buckley D."/>
            <person name="Burton J."/>
            <person name="Bye J."/>
            <person name="Carder C."/>
            <person name="Chapman J.C."/>
            <person name="Clark S.Y."/>
            <person name="Clarke G."/>
            <person name="Clee C."/>
            <person name="Cobley V."/>
            <person name="Collier R.E."/>
            <person name="Corby N."/>
            <person name="Coville G.J."/>
            <person name="Davies J."/>
            <person name="Deadman R."/>
            <person name="Dunn M."/>
            <person name="Earthrowl M."/>
            <person name="Ellington A.G."/>
            <person name="Errington H."/>
            <person name="Frankish A."/>
            <person name="Frankland J."/>
            <person name="French L."/>
            <person name="Garner P."/>
            <person name="Garnett J."/>
            <person name="Gay L."/>
            <person name="Ghori M.R.J."/>
            <person name="Gibson R."/>
            <person name="Gilby L.M."/>
            <person name="Gillett W."/>
            <person name="Glithero R.J."/>
            <person name="Grafham D.V."/>
            <person name="Griffiths C."/>
            <person name="Griffiths-Jones S."/>
            <person name="Grocock R."/>
            <person name="Hammond S."/>
            <person name="Harrison E.S.I."/>
            <person name="Hart E."/>
            <person name="Haugen E."/>
            <person name="Heath P.D."/>
            <person name="Holmes S."/>
            <person name="Holt K."/>
            <person name="Howden P.J."/>
            <person name="Hunt A.R."/>
            <person name="Hunt S.E."/>
            <person name="Hunter G."/>
            <person name="Isherwood J."/>
            <person name="James R."/>
            <person name="Johnson C."/>
            <person name="Johnson D."/>
            <person name="Joy A."/>
            <person name="Kay M."/>
            <person name="Kershaw J.K."/>
            <person name="Kibukawa M."/>
            <person name="Kimberley A.M."/>
            <person name="King A."/>
            <person name="Knights A.J."/>
            <person name="Lad H."/>
            <person name="Laird G."/>
            <person name="Lawlor S."/>
            <person name="Leongamornlert D.A."/>
            <person name="Lloyd D.M."/>
            <person name="Loveland J."/>
            <person name="Lovell J."/>
            <person name="Lush M.J."/>
            <person name="Lyne R."/>
            <person name="Martin S."/>
            <person name="Mashreghi-Mohammadi M."/>
            <person name="Matthews L."/>
            <person name="Matthews N.S.W."/>
            <person name="McLaren S."/>
            <person name="Milne S."/>
            <person name="Mistry S."/>
            <person name="Moore M.J.F."/>
            <person name="Nickerson T."/>
            <person name="O'Dell C.N."/>
            <person name="Oliver K."/>
            <person name="Palmeiri A."/>
            <person name="Palmer S.A."/>
            <person name="Parker A."/>
            <person name="Patel D."/>
            <person name="Pearce A.V."/>
            <person name="Peck A.I."/>
            <person name="Pelan S."/>
            <person name="Phelps K."/>
            <person name="Phillimore B.J."/>
            <person name="Plumb R."/>
            <person name="Rajan J."/>
            <person name="Raymond C."/>
            <person name="Rouse G."/>
            <person name="Saenphimmachak C."/>
            <person name="Sehra H.K."/>
            <person name="Sheridan E."/>
            <person name="Shownkeen R."/>
            <person name="Sims S."/>
            <person name="Skuce C.D."/>
            <person name="Smith M."/>
            <person name="Steward C."/>
            <person name="Subramanian S."/>
            <person name="Sycamore N."/>
            <person name="Tracey A."/>
            <person name="Tromans A."/>
            <person name="Van Helmond Z."/>
            <person name="Wall M."/>
            <person name="Wallis J.M."/>
            <person name="White S."/>
            <person name="Whitehead S.L."/>
            <person name="Wilkinson J.E."/>
            <person name="Willey D.L."/>
            <person name="Williams H."/>
            <person name="Wilming L."/>
            <person name="Wray P.W."/>
            <person name="Wu Z."/>
            <person name="Coulson A."/>
            <person name="Vaudin M."/>
            <person name="Sulston J.E."/>
            <person name="Durbin R.M."/>
            <person name="Hubbard T."/>
            <person name="Wooster R."/>
            <person name="Dunham I."/>
            <person name="Carter N.P."/>
            <person name="McVean G."/>
            <person name="Ross M.T."/>
            <person name="Harrow J."/>
            <person name="Olson M.V."/>
            <person name="Beck S."/>
            <person name="Rogers J."/>
            <person name="Bentley D.R."/>
        </authorList>
    </citation>
    <scope>NUCLEOTIDE SEQUENCE [LARGE SCALE GENOMIC DNA]</scope>
</reference>
<reference key="5">
    <citation type="submission" date="2005-09" db="EMBL/GenBank/DDBJ databases">
        <authorList>
            <person name="Mural R.J."/>
            <person name="Istrail S."/>
            <person name="Sutton G."/>
            <person name="Florea L."/>
            <person name="Halpern A.L."/>
            <person name="Mobarry C.M."/>
            <person name="Lippert R."/>
            <person name="Walenz B."/>
            <person name="Shatkay H."/>
            <person name="Dew I."/>
            <person name="Miller J.R."/>
            <person name="Flanigan M.J."/>
            <person name="Edwards N.J."/>
            <person name="Bolanos R."/>
            <person name="Fasulo D."/>
            <person name="Halldorsson B.V."/>
            <person name="Hannenhalli S."/>
            <person name="Turner R."/>
            <person name="Yooseph S."/>
            <person name="Lu F."/>
            <person name="Nusskern D.R."/>
            <person name="Shue B.C."/>
            <person name="Zheng X.H."/>
            <person name="Zhong F."/>
            <person name="Delcher A.L."/>
            <person name="Huson D.H."/>
            <person name="Kravitz S.A."/>
            <person name="Mouchard L."/>
            <person name="Reinert K."/>
            <person name="Remington K.A."/>
            <person name="Clark A.G."/>
            <person name="Waterman M.S."/>
            <person name="Eichler E.E."/>
            <person name="Adams M.D."/>
            <person name="Hunkapiller M.W."/>
            <person name="Myers E.W."/>
            <person name="Venter J.C."/>
        </authorList>
    </citation>
    <scope>NUCLEOTIDE SEQUENCE [LARGE SCALE GENOMIC DNA]</scope>
</reference>
<reference key="6">
    <citation type="journal article" date="2004" name="Genome Res.">
        <title>The status, quality, and expansion of the NIH full-length cDNA project: the Mammalian Gene Collection (MGC).</title>
        <authorList>
            <consortium name="The MGC Project Team"/>
        </authorList>
    </citation>
    <scope>NUCLEOTIDE SEQUENCE [LARGE SCALE MRNA] (ISOFORM 1)</scope>
    <source>
        <tissue>Testis</tissue>
    </source>
</reference>
<reference key="7">
    <citation type="journal article" date="1997" name="Genomics">
        <title>Human TNF receptor-associated factor 5 (TRAF5): cDNA cloning, expression and assignment of the TRAF5 gene to chromosome 1q32.</title>
        <authorList>
            <person name="Nakano H."/>
            <person name="Shindo M."/>
            <person name="Yamada K."/>
            <person name="Yoshida M.C."/>
            <person name="Santee S.M."/>
            <person name="Ware C.F."/>
            <person name="Jenkins N.A."/>
            <person name="Gilbert D.J."/>
            <person name="Yagita H."/>
            <person name="Copeland N.G."/>
            <person name="Okumura K."/>
        </authorList>
    </citation>
    <scope>NUCLEOTIDE SEQUENCE [MRNA] OF 20-557 (ISOFORM 1)</scope>
</reference>
<reference key="8">
    <citation type="journal article" date="2001" name="Cell. Signal.">
        <title>The TNF-receptor-associated factor family: scaffold molecules for cytokine receptors, kinases and their regulators.</title>
        <authorList>
            <person name="Wajant H."/>
            <person name="Henkler F."/>
            <person name="Scheurich P."/>
        </authorList>
    </citation>
    <scope>REVIEW</scope>
</reference>
<reference key="9">
    <citation type="journal article" date="2001" name="Oncogene">
        <title>Tumor necrosis factor receptor-associated factors (TRAFs).</title>
        <authorList>
            <person name="Bradley J.R."/>
            <person name="Pober J.S."/>
        </authorList>
    </citation>
    <scope>REVIEW</scope>
</reference>
<reference key="10">
    <citation type="journal article" date="1997" name="J. Biol. Chem.">
        <title>Herpesvirus entry mediator, a member of the tumor necrosis factor receptor (TNFR) family, interacts with members of the TNFR-associated factor family and activates the transcription factors NF-kappaB and AP-1.</title>
        <authorList>
            <person name="Marsters S.A."/>
            <person name="Ayres T.M."/>
            <person name="Skubatch M."/>
            <person name="Gray C.L."/>
            <person name="Rothe M."/>
            <person name="Ashkenazi A."/>
        </authorList>
    </citation>
    <scope>INTERACTION WITH TNFRSF14</scope>
</reference>
<reference key="11">
    <citation type="journal article" date="1997" name="J. Biol. Chem.">
        <title>ATAR, a novel tumor necrosis factor receptor family member, signals through TRAF2 and TRAF5.</title>
        <authorList>
            <person name="Hsu H."/>
            <person name="Solovyev I."/>
            <person name="Colombero A."/>
            <person name="Elliott R."/>
            <person name="Kelley M."/>
            <person name="Boyle W.J."/>
        </authorList>
    </citation>
    <scope>INTERACTION WITH TNFRSF14</scope>
</reference>
<reference key="12">
    <citation type="journal article" date="1997" name="Proc. Natl. Acad. Sci. U.S.A.">
        <title>Tumor necrosis factor (TNF)-mediated kinase cascades: bifurcation of nuclear factor-kappaB and c-jun N-terminal kinase (JNK/SAPK) pathways at TNF receptor-associated factor 2.</title>
        <authorList>
            <person name="Song H.Y."/>
            <person name="Regnier C.H."/>
            <person name="Kirschning C.J."/>
            <person name="Goeddel D.V."/>
            <person name="Rothe M."/>
        </authorList>
    </citation>
    <scope>INTERACTION WITH MAP3K14</scope>
</reference>
<reference key="13">
    <citation type="journal article" date="1997" name="J. Biol. Chem.">
        <title>Tumor necrosis factor receptor-associated factor (TRAF) 5 and TRAF2 are involved in CD30-mediated NFkappaB activation.</title>
        <authorList>
            <person name="Aizawa S."/>
            <person name="Nakano H."/>
            <person name="Ishida T."/>
            <person name="Horie R."/>
            <person name="Nagai M."/>
            <person name="Ito K."/>
            <person name="Yagita H."/>
            <person name="Okumura K."/>
            <person name="Inoue J."/>
            <person name="Watanabe T."/>
        </authorList>
    </citation>
    <scope>INTERACTION WITH TNFRSF8</scope>
</reference>
<reference key="14">
    <citation type="journal article" date="1998" name="Mol. Cell">
        <title>ASK1 is essential for JNK/SAPK activation by TRAF2.</title>
        <authorList>
            <person name="Nishitoh H."/>
            <person name="Saitoh M."/>
            <person name="Mochida Y."/>
            <person name="Takeda K."/>
            <person name="Nakano H."/>
            <person name="Rothe M."/>
            <person name="Miyazono K."/>
            <person name="Ichijo H."/>
        </authorList>
    </citation>
    <scope>INTERACTION WITH MAP3K5</scope>
</reference>
<reference key="15">
    <citation type="journal article" date="1998" name="Biochemistry">
        <title>CD40-tumor necrosis factor receptor-associated factor (TRAF) interactions: regulation of CD40 signaling through multiple TRAF binding sites and TRAF hetero-oligomerization.</title>
        <authorList>
            <person name="Pullen S.S."/>
            <person name="Miller H.G."/>
            <person name="Everdeen D.S."/>
            <person name="Dang T.T."/>
            <person name="Crute J.J."/>
            <person name="Kehry M.R."/>
        </authorList>
    </citation>
    <scope>INTERACTION WITH TNFRSF5 AND TRAF3</scope>
</reference>
<reference key="16">
    <citation type="journal article" date="1998" name="J. Biol. Chem.">
        <title>Activation of OX40 signal transduction pathways leads to tumor necrosis factor receptor-associated factor (TRAF) 2- and TRAF5-mediated NF-kappaB activation.</title>
        <authorList>
            <person name="Kawamata S."/>
            <person name="Hori T."/>
            <person name="Imura A."/>
            <person name="Takaori-Kondo A."/>
            <person name="Uchiyama T."/>
        </authorList>
    </citation>
    <scope>INTERACTION WITH TNFRSF4</scope>
</reference>
<reference key="17">
    <citation type="journal article" date="1998" name="J. Biol. Chem.">
        <title>RIP2 is a novel NF-kappaB-activating and cell death-inducing kinase.</title>
        <authorList>
            <person name="McCarthy J.V."/>
            <person name="Ni J."/>
            <person name="Dixit V.M."/>
        </authorList>
    </citation>
    <scope>INTERACTION WITH RIPK2</scope>
</reference>
<reference key="18">
    <citation type="journal article" date="2000" name="J. Biol. Chem.">
        <title>TAJ, a novel member of the tumor necrosis factor receptor family, activates the c-Jun N-terminal kinase pathway and mediates caspase-independent cell death.</title>
        <authorList>
            <person name="Eby M.T."/>
            <person name="Jasmin A."/>
            <person name="Kumar A."/>
            <person name="Sharma K."/>
            <person name="Chaudhary P.M."/>
        </authorList>
    </citation>
    <scope>INTERACTION WITH TNFRSF19</scope>
</reference>
<reference key="19">
    <citation type="journal article" date="1998" name="J. Biol. Chem.">
        <title>The TRAF family of signal transducers mediates NF-kappaB activation by the TRANCE receptor.</title>
        <authorList>
            <person name="Wong B.R."/>
            <person name="Josien R."/>
            <person name="Lee S.Y."/>
            <person name="Vologodskaia M."/>
            <person name="Steinman R.M."/>
            <person name="Choi Y."/>
        </authorList>
    </citation>
    <scope>INTERACTION WITH TNFRSF11A</scope>
</reference>
<reference key="20">
    <citation type="journal article" date="2000" name="J. Biol. Chem.">
        <title>TTRAP, a novel protein that associates with CD40, tumor necrosis factor (TNF) receptor-75 and TNF receptor-associated factors (TRAFs), and that inhibits nuclear factor-kappa B activation.</title>
        <authorList>
            <person name="Pype S."/>
            <person name="Declercq W."/>
            <person name="Ibrahimi A."/>
            <person name="Michiels C."/>
            <person name="Van Rietschoten J.G.I."/>
            <person name="Dewulf N."/>
            <person name="de Boer M."/>
            <person name="Vandenabeele P."/>
            <person name="Huylebroeck D."/>
            <person name="Remacle J.E."/>
        </authorList>
    </citation>
    <scope>INTERACTION WITH TDP2</scope>
</reference>
<reference key="21">
    <citation type="journal article" date="2000" name="J. Exp. Med.">
        <title>TACI is a TRAF-interacting receptor for TALL-1, a tumor necrosis factor family member involved in B cell regulation.</title>
        <authorList>
            <person name="Xia X.-Z."/>
            <person name="Treanor J."/>
            <person name="Senaldi G."/>
            <person name="Khare S.D."/>
            <person name="Boone T."/>
            <person name="Kelley M."/>
            <person name="Theill L.E."/>
            <person name="Colombero A."/>
            <person name="Solovyev I."/>
            <person name="Lee F."/>
            <person name="McCabe S."/>
            <person name="Elliott R."/>
            <person name="Miner K."/>
            <person name="Hawkins N."/>
            <person name="Guo J."/>
            <person name="Stolina M."/>
            <person name="Yu G."/>
            <person name="Wang J."/>
            <person name="Delaney J."/>
            <person name="Meng S.-Y."/>
            <person name="Boyle W.J."/>
            <person name="Hsu H."/>
        </authorList>
    </citation>
    <scope>INTERACTION WITH TNFRSF13B</scope>
</reference>
<reference key="22">
    <citation type="journal article" date="2000" name="Proc. Natl. Acad. Sci. U.S.A.">
        <title>B cell maturation protein is a receptor for the tumor necrosis factor family member TALL-1.</title>
        <authorList>
            <person name="Shu H.-B."/>
            <person name="Johnson H."/>
        </authorList>
    </citation>
    <scope>INTERACTION WITH TNFRSF17</scope>
</reference>
<reference key="23">
    <citation type="journal article" date="2004" name="Mol. Cell. Biol.">
        <title>TRAF family proteins link PKR with NF-kappa B activation.</title>
        <authorList>
            <person name="Gil J."/>
            <person name="Garcia M.A."/>
            <person name="Gomez-Puertas P."/>
            <person name="Guerra S."/>
            <person name="Rullas J."/>
            <person name="Nakano H."/>
            <person name="Alcami J."/>
            <person name="Esteban M."/>
        </authorList>
    </citation>
    <scope>FUNCTION</scope>
    <scope>INTERACTION WITH EIF2AK2</scope>
    <scope>SUBCELLULAR LOCATION</scope>
</reference>
<reference key="24">
    <citation type="journal article" date="2009" name="Sci. Signal.">
        <title>Quantitative phosphoproteomic analysis of T cell receptor signaling reveals system-wide modulation of protein-protein interactions.</title>
        <authorList>
            <person name="Mayya V."/>
            <person name="Lundgren D.H."/>
            <person name="Hwang S.-I."/>
            <person name="Rezaul K."/>
            <person name="Wu L."/>
            <person name="Eng J.K."/>
            <person name="Rodionov V."/>
            <person name="Han D.K."/>
        </authorList>
    </citation>
    <scope>IDENTIFICATION BY MASS SPECTROMETRY [LARGE SCALE ANALYSIS]</scope>
    <source>
        <tissue>Leukemic T-cell</tissue>
    </source>
</reference>
<organism>
    <name type="scientific">Homo sapiens</name>
    <name type="common">Human</name>
    <dbReference type="NCBI Taxonomy" id="9606"/>
    <lineage>
        <taxon>Eukaryota</taxon>
        <taxon>Metazoa</taxon>
        <taxon>Chordata</taxon>
        <taxon>Craniata</taxon>
        <taxon>Vertebrata</taxon>
        <taxon>Euteleostomi</taxon>
        <taxon>Mammalia</taxon>
        <taxon>Eutheria</taxon>
        <taxon>Euarchontoglires</taxon>
        <taxon>Primates</taxon>
        <taxon>Haplorrhini</taxon>
        <taxon>Catarrhini</taxon>
        <taxon>Hominidae</taxon>
        <taxon>Homo</taxon>
    </lineage>
</organism>
<dbReference type="EMBL" id="AB000509">
    <property type="protein sequence ID" value="BAA25262.1"/>
    <property type="molecule type" value="mRNA"/>
</dbReference>
<dbReference type="EMBL" id="AK295766">
    <property type="protein sequence ID" value="BAG58591.1"/>
    <property type="molecule type" value="mRNA"/>
</dbReference>
<dbReference type="EMBL" id="AK303286">
    <property type="protein sequence ID" value="BAG64364.1"/>
    <property type="molecule type" value="mRNA"/>
</dbReference>
<dbReference type="EMBL" id="CR536557">
    <property type="protein sequence ID" value="CAG38794.1"/>
    <property type="molecule type" value="mRNA"/>
</dbReference>
<dbReference type="EMBL" id="AL590101">
    <property type="status" value="NOT_ANNOTATED_CDS"/>
    <property type="molecule type" value="Genomic_DNA"/>
</dbReference>
<dbReference type="EMBL" id="CH471100">
    <property type="protein sequence ID" value="EAW93420.1"/>
    <property type="molecule type" value="Genomic_DNA"/>
</dbReference>
<dbReference type="EMBL" id="CH471100">
    <property type="protein sequence ID" value="EAW93422.1"/>
    <property type="molecule type" value="Genomic_DNA"/>
</dbReference>
<dbReference type="EMBL" id="BC029600">
    <property type="protein sequence ID" value="AAH29600.1"/>
    <property type="molecule type" value="mRNA"/>
</dbReference>
<dbReference type="EMBL" id="U69108">
    <property type="protein sequence ID" value="AAC51329.1"/>
    <property type="molecule type" value="mRNA"/>
</dbReference>
<dbReference type="CCDS" id="CCDS1497.1">
    <molecule id="O00463-1"/>
</dbReference>
<dbReference type="PIR" id="JC6539">
    <property type="entry name" value="JC6539"/>
</dbReference>
<dbReference type="RefSeq" id="NP_001029082.1">
    <molecule id="O00463-1"/>
    <property type="nucleotide sequence ID" value="NM_001033910.3"/>
</dbReference>
<dbReference type="RefSeq" id="NP_001306136.1">
    <molecule id="O00463-2"/>
    <property type="nucleotide sequence ID" value="NM_001319207.2"/>
</dbReference>
<dbReference type="RefSeq" id="NP_004610.1">
    <molecule id="O00463-1"/>
    <property type="nucleotide sequence ID" value="NM_004619.4"/>
</dbReference>
<dbReference type="RefSeq" id="NP_665702.1">
    <molecule id="O00463-1"/>
    <property type="nucleotide sequence ID" value="NM_145759.3"/>
</dbReference>
<dbReference type="RefSeq" id="XP_011508261.1">
    <molecule id="O00463-2"/>
    <property type="nucleotide sequence ID" value="XM_011509959.4"/>
</dbReference>
<dbReference type="RefSeq" id="XP_011508262.1">
    <molecule id="O00463-2"/>
    <property type="nucleotide sequence ID" value="XM_011509960.4"/>
</dbReference>
<dbReference type="RefSeq" id="XP_016857710.1">
    <property type="nucleotide sequence ID" value="XM_017002221.1"/>
</dbReference>
<dbReference type="PDB" id="7L3L">
    <property type="method" value="X-ray"/>
    <property type="resolution" value="2.80 A"/>
    <property type="chains" value="A/C=23-164"/>
</dbReference>
<dbReference type="PDBsum" id="7L3L"/>
<dbReference type="SMR" id="O00463"/>
<dbReference type="BioGRID" id="113040">
    <property type="interactions" value="100"/>
</dbReference>
<dbReference type="ComplexPortal" id="CPX-25723">
    <property type="entry name" value="sTNF-TNR1A receptor-ligand core complex, BIRC3 variant"/>
</dbReference>
<dbReference type="ComplexPortal" id="CPX-25726">
    <property type="entry name" value="mTNF-TNR1A receptor-ligand core complex, BIRC3 variant"/>
</dbReference>
<dbReference type="ComplexPortal" id="CPX-8828">
    <property type="entry name" value="sTNF-TNR1A receptor-ligand core complex, BIRC2 variant"/>
</dbReference>
<dbReference type="ComplexPortal" id="CPX-8932">
    <property type="entry name" value="mTNF-TNR1A receptor-ligand core complex, BIRC2 variant"/>
</dbReference>
<dbReference type="FunCoup" id="O00463">
    <property type="interactions" value="468"/>
</dbReference>
<dbReference type="IntAct" id="O00463">
    <property type="interactions" value="64"/>
</dbReference>
<dbReference type="MINT" id="O00463"/>
<dbReference type="STRING" id="9606.ENSP00000261464"/>
<dbReference type="iPTMnet" id="O00463"/>
<dbReference type="PhosphoSitePlus" id="O00463"/>
<dbReference type="BioMuta" id="TRAF5"/>
<dbReference type="jPOST" id="O00463"/>
<dbReference type="MassIVE" id="O00463"/>
<dbReference type="PaxDb" id="9606-ENSP00000261464"/>
<dbReference type="PeptideAtlas" id="O00463"/>
<dbReference type="ProteomicsDB" id="47913">
    <molecule id="O00463-1"/>
</dbReference>
<dbReference type="Pumba" id="O00463"/>
<dbReference type="Antibodypedia" id="1975">
    <property type="antibodies" value="300 antibodies from 39 providers"/>
</dbReference>
<dbReference type="DNASU" id="7188"/>
<dbReference type="Ensembl" id="ENST00000261464.10">
    <molecule id="O00463-1"/>
    <property type="protein sequence ID" value="ENSP00000261464.5"/>
    <property type="gene ID" value="ENSG00000082512.15"/>
</dbReference>
<dbReference type="Ensembl" id="ENST00000336184.6">
    <molecule id="O00463-1"/>
    <property type="protein sequence ID" value="ENSP00000336825.2"/>
    <property type="gene ID" value="ENSG00000082512.15"/>
</dbReference>
<dbReference type="Ensembl" id="ENST00000367004.3">
    <molecule id="O00463-1"/>
    <property type="protein sequence ID" value="ENSP00000355971.3"/>
    <property type="gene ID" value="ENSG00000082512.15"/>
</dbReference>
<dbReference type="GeneID" id="7188"/>
<dbReference type="KEGG" id="hsa:7188"/>
<dbReference type="MANE-Select" id="ENST00000261464.10">
    <property type="protein sequence ID" value="ENSP00000261464.5"/>
    <property type="RefSeq nucleotide sequence ID" value="NM_001033910.3"/>
    <property type="RefSeq protein sequence ID" value="NP_001029082.1"/>
</dbReference>
<dbReference type="UCSC" id="uc001hih.4">
    <molecule id="O00463-1"/>
    <property type="organism name" value="human"/>
</dbReference>
<dbReference type="AGR" id="HGNC:12035"/>
<dbReference type="CTD" id="7188"/>
<dbReference type="DisGeNET" id="7188"/>
<dbReference type="GeneCards" id="TRAF5"/>
<dbReference type="HGNC" id="HGNC:12035">
    <property type="gene designation" value="TRAF5"/>
</dbReference>
<dbReference type="HPA" id="ENSG00000082512">
    <property type="expression patterns" value="Low tissue specificity"/>
</dbReference>
<dbReference type="MalaCards" id="TRAF5"/>
<dbReference type="MIM" id="602356">
    <property type="type" value="gene"/>
</dbReference>
<dbReference type="neXtProt" id="NX_O00463"/>
<dbReference type="OpenTargets" id="ENSG00000082512"/>
<dbReference type="PharmGKB" id="PA36712"/>
<dbReference type="VEuPathDB" id="HostDB:ENSG00000082512"/>
<dbReference type="eggNOG" id="KOG0297">
    <property type="taxonomic scope" value="Eukaryota"/>
</dbReference>
<dbReference type="GeneTree" id="ENSGT00940000160954"/>
<dbReference type="HOGENOM" id="CLU_021061_4_1_1"/>
<dbReference type="InParanoid" id="O00463"/>
<dbReference type="OMA" id="NAVPICP"/>
<dbReference type="OrthoDB" id="1737200at2759"/>
<dbReference type="PAN-GO" id="O00463">
    <property type="GO annotations" value="10 GO annotations based on evolutionary models"/>
</dbReference>
<dbReference type="PhylomeDB" id="O00463"/>
<dbReference type="TreeFam" id="TF321154"/>
<dbReference type="PathwayCommons" id="O00463"/>
<dbReference type="SignaLink" id="O00463"/>
<dbReference type="SIGNOR" id="O00463"/>
<dbReference type="BioGRID-ORCS" id="7188">
    <property type="hits" value="11 hits in 1198 CRISPR screens"/>
</dbReference>
<dbReference type="ChiTaRS" id="TRAF5">
    <property type="organism name" value="human"/>
</dbReference>
<dbReference type="GeneWiki" id="TRAF5"/>
<dbReference type="GenomeRNAi" id="7188"/>
<dbReference type="Pharos" id="O00463">
    <property type="development level" value="Tbio"/>
</dbReference>
<dbReference type="PRO" id="PR:O00463"/>
<dbReference type="Proteomes" id="UP000005640">
    <property type="component" value="Chromosome 1"/>
</dbReference>
<dbReference type="RNAct" id="O00463">
    <property type="molecule type" value="protein"/>
</dbReference>
<dbReference type="Bgee" id="ENSG00000082512">
    <property type="expression patterns" value="Expressed in saphenous vein and 175 other cell types or tissues"/>
</dbReference>
<dbReference type="GO" id="GO:0035631">
    <property type="term" value="C:CD40 receptor complex"/>
    <property type="evidence" value="ECO:0000250"/>
    <property type="project" value="BHF-UCL"/>
</dbReference>
<dbReference type="GO" id="GO:0005813">
    <property type="term" value="C:centrosome"/>
    <property type="evidence" value="ECO:0000314"/>
    <property type="project" value="HPA"/>
</dbReference>
<dbReference type="GO" id="GO:0005737">
    <property type="term" value="C:cytoplasm"/>
    <property type="evidence" value="ECO:0000314"/>
    <property type="project" value="UniProt"/>
</dbReference>
<dbReference type="GO" id="GO:0009898">
    <property type="term" value="C:cytoplasmic side of plasma membrane"/>
    <property type="evidence" value="ECO:0000250"/>
    <property type="project" value="BHF-UCL"/>
</dbReference>
<dbReference type="GO" id="GO:0005829">
    <property type="term" value="C:cytosol"/>
    <property type="evidence" value="ECO:0000314"/>
    <property type="project" value="HPA"/>
</dbReference>
<dbReference type="GO" id="GO:0042802">
    <property type="term" value="F:identical protein binding"/>
    <property type="evidence" value="ECO:0000353"/>
    <property type="project" value="IntAct"/>
</dbReference>
<dbReference type="GO" id="GO:0035591">
    <property type="term" value="F:signaling adaptor activity"/>
    <property type="evidence" value="ECO:0000318"/>
    <property type="project" value="GO_Central"/>
</dbReference>
<dbReference type="GO" id="GO:0031996">
    <property type="term" value="F:thioesterase binding"/>
    <property type="evidence" value="ECO:0000353"/>
    <property type="project" value="UniProtKB"/>
</dbReference>
<dbReference type="GO" id="GO:0005164">
    <property type="term" value="F:tumor necrosis factor receptor binding"/>
    <property type="evidence" value="ECO:0007669"/>
    <property type="project" value="InterPro"/>
</dbReference>
<dbReference type="GO" id="GO:0061630">
    <property type="term" value="F:ubiquitin protein ligase activity"/>
    <property type="evidence" value="ECO:0000314"/>
    <property type="project" value="UniProt"/>
</dbReference>
<dbReference type="GO" id="GO:0031625">
    <property type="term" value="F:ubiquitin protein ligase binding"/>
    <property type="evidence" value="ECO:0000353"/>
    <property type="project" value="UniProtKB"/>
</dbReference>
<dbReference type="GO" id="GO:0008270">
    <property type="term" value="F:zinc ion binding"/>
    <property type="evidence" value="ECO:0007669"/>
    <property type="project" value="UniProtKB-KW"/>
</dbReference>
<dbReference type="GO" id="GO:0006915">
    <property type="term" value="P:apoptotic process"/>
    <property type="evidence" value="ECO:0007669"/>
    <property type="project" value="UniProtKB-KW"/>
</dbReference>
<dbReference type="GO" id="GO:0023035">
    <property type="term" value="P:CD40 signaling pathway"/>
    <property type="evidence" value="ECO:0000314"/>
    <property type="project" value="UniProt"/>
</dbReference>
<dbReference type="GO" id="GO:0007166">
    <property type="term" value="P:cell surface receptor signaling pathway"/>
    <property type="evidence" value="ECO:0000318"/>
    <property type="project" value="GO_Central"/>
</dbReference>
<dbReference type="GO" id="GO:0097400">
    <property type="term" value="P:interleukin-17-mediated signaling pathway"/>
    <property type="evidence" value="ECO:0007669"/>
    <property type="project" value="Ensembl"/>
</dbReference>
<dbReference type="GO" id="GO:0048255">
    <property type="term" value="P:mRNA stabilization"/>
    <property type="evidence" value="ECO:0007669"/>
    <property type="project" value="Ensembl"/>
</dbReference>
<dbReference type="GO" id="GO:0043123">
    <property type="term" value="P:positive regulation of canonical NF-kappaB signal transduction"/>
    <property type="evidence" value="ECO:0000315"/>
    <property type="project" value="BHF-UCL"/>
</dbReference>
<dbReference type="GO" id="GO:0008284">
    <property type="term" value="P:positive regulation of cell population proliferation"/>
    <property type="evidence" value="ECO:0007669"/>
    <property type="project" value="Ensembl"/>
</dbReference>
<dbReference type="GO" id="GO:0051092">
    <property type="term" value="P:positive regulation of NF-kappaB transcription factor activity"/>
    <property type="evidence" value="ECO:0000315"/>
    <property type="project" value="UniProtKB"/>
</dbReference>
<dbReference type="GO" id="GO:0042981">
    <property type="term" value="P:regulation of apoptotic process"/>
    <property type="evidence" value="ECO:0007669"/>
    <property type="project" value="InterPro"/>
</dbReference>
<dbReference type="GO" id="GO:0043122">
    <property type="term" value="P:regulation of canonical NF-kappaB signal transduction"/>
    <property type="evidence" value="ECO:0000318"/>
    <property type="project" value="GO_Central"/>
</dbReference>
<dbReference type="GO" id="GO:0007165">
    <property type="term" value="P:signal transduction"/>
    <property type="evidence" value="ECO:0000304"/>
    <property type="project" value="ProtInc"/>
</dbReference>
<dbReference type="GO" id="GO:0023019">
    <property type="term" value="P:signal transduction involved in regulation of gene expression"/>
    <property type="evidence" value="ECO:0007669"/>
    <property type="project" value="Ensembl"/>
</dbReference>
<dbReference type="GO" id="GO:0033209">
    <property type="term" value="P:tumor necrosis factor-mediated signaling pathway"/>
    <property type="evidence" value="ECO:0000315"/>
    <property type="project" value="BHF-UCL"/>
</dbReference>
<dbReference type="CDD" id="cd16642">
    <property type="entry name" value="mRING-HC-C3HC3D_TRAF5"/>
    <property type="match status" value="1"/>
</dbReference>
<dbReference type="FunFam" id="2.60.210.10:FF:000001">
    <property type="entry name" value="TNF receptor-associated factor"/>
    <property type="match status" value="1"/>
</dbReference>
<dbReference type="FunFam" id="3.30.40.10:FF:000274">
    <property type="entry name" value="TNF receptor-associated factor"/>
    <property type="match status" value="1"/>
</dbReference>
<dbReference type="FunFam" id="3.30.40.10:FF:000323">
    <property type="entry name" value="TNF receptor-associated factor"/>
    <property type="match status" value="1"/>
</dbReference>
<dbReference type="FunFam" id="3.30.40.10:FF:000356">
    <property type="entry name" value="TNF receptor-associated factor"/>
    <property type="match status" value="1"/>
</dbReference>
<dbReference type="Gene3D" id="2.60.210.10">
    <property type="entry name" value="Apoptosis, Tumor Necrosis Factor Receptor Associated Protein 2, Chain A"/>
    <property type="match status" value="1"/>
</dbReference>
<dbReference type="Gene3D" id="3.30.40.10">
    <property type="entry name" value="Zinc/RING finger domain, C3HC4 (zinc finger)"/>
    <property type="match status" value="3"/>
</dbReference>
<dbReference type="InterPro" id="IPR002083">
    <property type="entry name" value="MATH/TRAF_dom"/>
</dbReference>
<dbReference type="InterPro" id="IPR012227">
    <property type="entry name" value="TNF_rcpt-assoc_TRAF_met"/>
</dbReference>
<dbReference type="InterPro" id="IPR008974">
    <property type="entry name" value="TRAF-like"/>
</dbReference>
<dbReference type="InterPro" id="IPR049342">
    <property type="entry name" value="TRAF1-6_MATH_dom"/>
</dbReference>
<dbReference type="InterPro" id="IPR049440">
    <property type="entry name" value="TRAF3/5_RING"/>
</dbReference>
<dbReference type="InterPro" id="IPR027130">
    <property type="entry name" value="TRAF5_C3HC3D_RING-HC_finger"/>
</dbReference>
<dbReference type="InterPro" id="IPR001841">
    <property type="entry name" value="Znf_RING"/>
</dbReference>
<dbReference type="InterPro" id="IPR013083">
    <property type="entry name" value="Znf_RING/FYVE/PHD"/>
</dbReference>
<dbReference type="InterPro" id="IPR017907">
    <property type="entry name" value="Znf_RING_CS"/>
</dbReference>
<dbReference type="InterPro" id="IPR001293">
    <property type="entry name" value="Znf_TRAF"/>
</dbReference>
<dbReference type="PANTHER" id="PTHR10131">
    <property type="entry name" value="TNF RECEPTOR ASSOCIATED FACTOR"/>
    <property type="match status" value="1"/>
</dbReference>
<dbReference type="PANTHER" id="PTHR10131:SF83">
    <property type="entry name" value="TNF RECEPTOR-ASSOCIATED FACTOR 5"/>
    <property type="match status" value="1"/>
</dbReference>
<dbReference type="Pfam" id="PF21355">
    <property type="entry name" value="TRAF-mep_MATH"/>
    <property type="match status" value="1"/>
</dbReference>
<dbReference type="Pfam" id="PF21363">
    <property type="entry name" value="TRAF3_RING"/>
    <property type="match status" value="1"/>
</dbReference>
<dbReference type="Pfam" id="PF02176">
    <property type="entry name" value="zf-TRAF"/>
    <property type="match status" value="1"/>
</dbReference>
<dbReference type="PIRSF" id="PIRSF015614">
    <property type="entry name" value="TRAF"/>
    <property type="match status" value="1"/>
</dbReference>
<dbReference type="SMART" id="SM00061">
    <property type="entry name" value="MATH"/>
    <property type="match status" value="1"/>
</dbReference>
<dbReference type="SMART" id="SM00184">
    <property type="entry name" value="RING"/>
    <property type="match status" value="1"/>
</dbReference>
<dbReference type="SUPFAM" id="SSF57850">
    <property type="entry name" value="RING/U-box"/>
    <property type="match status" value="1"/>
</dbReference>
<dbReference type="SUPFAM" id="SSF49599">
    <property type="entry name" value="TRAF domain-like"/>
    <property type="match status" value="3"/>
</dbReference>
<dbReference type="PROSITE" id="PS50144">
    <property type="entry name" value="MATH"/>
    <property type="match status" value="1"/>
</dbReference>
<dbReference type="PROSITE" id="PS00518">
    <property type="entry name" value="ZF_RING_1"/>
    <property type="match status" value="1"/>
</dbReference>
<dbReference type="PROSITE" id="PS50089">
    <property type="entry name" value="ZF_RING_2"/>
    <property type="match status" value="1"/>
</dbReference>
<dbReference type="PROSITE" id="PS50145">
    <property type="entry name" value="ZF_TRAF"/>
    <property type="match status" value="2"/>
</dbReference>
<name>TRAF5_HUMAN</name>
<protein>
    <recommendedName>
        <fullName>TNF receptor-associated factor 5</fullName>
    </recommendedName>
    <alternativeName>
        <fullName>RING finger protein 84</fullName>
    </alternativeName>
</protein>
<keyword id="KW-0002">3D-structure</keyword>
<keyword id="KW-0025">Alternative splicing</keyword>
<keyword id="KW-0053">Apoptosis</keyword>
<keyword id="KW-0175">Coiled coil</keyword>
<keyword id="KW-0963">Cytoplasm</keyword>
<keyword id="KW-1017">Isopeptide bond</keyword>
<keyword id="KW-0479">Metal-binding</keyword>
<keyword id="KW-1267">Proteomics identification</keyword>
<keyword id="KW-1185">Reference proteome</keyword>
<keyword id="KW-0677">Repeat</keyword>
<keyword id="KW-0832">Ubl conjugation</keyword>
<keyword id="KW-0862">Zinc</keyword>
<keyword id="KW-0863">Zinc-finger</keyword>
<evidence type="ECO:0000250" key="1">
    <source>
        <dbReference type="UniProtKB" id="P70191"/>
    </source>
</evidence>
<evidence type="ECO:0000255" key="2"/>
<evidence type="ECO:0000255" key="3">
    <source>
        <dbReference type="PROSITE-ProRule" id="PRU00129"/>
    </source>
</evidence>
<evidence type="ECO:0000255" key="4">
    <source>
        <dbReference type="PROSITE-ProRule" id="PRU00175"/>
    </source>
</evidence>
<evidence type="ECO:0000255" key="5">
    <source>
        <dbReference type="PROSITE-ProRule" id="PRU00207"/>
    </source>
</evidence>
<evidence type="ECO:0000269" key="6">
    <source>
    </source>
</evidence>
<evidence type="ECO:0000269" key="7">
    <source>
    </source>
</evidence>
<evidence type="ECO:0000269" key="8">
    <source>
    </source>
</evidence>
<evidence type="ECO:0000269" key="9">
    <source>
    </source>
</evidence>
<evidence type="ECO:0000269" key="10">
    <source>
    </source>
</evidence>
<evidence type="ECO:0000269" key="11">
    <source>
    </source>
</evidence>
<evidence type="ECO:0000269" key="12">
    <source>
    </source>
</evidence>
<evidence type="ECO:0000269" key="13">
    <source>
    </source>
</evidence>
<evidence type="ECO:0000269" key="14">
    <source>
    </source>
</evidence>
<evidence type="ECO:0000269" key="15">
    <source>
    </source>
</evidence>
<evidence type="ECO:0000269" key="16">
    <source>
    </source>
</evidence>
<evidence type="ECO:0000269" key="17">
    <source>
    </source>
</evidence>
<evidence type="ECO:0000269" key="18">
    <source>
    </source>
</evidence>
<evidence type="ECO:0000269" key="19">
    <source>
    </source>
</evidence>
<evidence type="ECO:0000269" key="20">
    <source>
    </source>
</evidence>
<evidence type="ECO:0000269" key="21">
    <source>
    </source>
</evidence>
<evidence type="ECO:0000303" key="22">
    <source>
    </source>
</evidence>
<evidence type="ECO:0000305" key="23"/>
<evidence type="ECO:0000305" key="24">
    <source>
    </source>
</evidence>
<evidence type="ECO:0007829" key="25">
    <source>
        <dbReference type="PDB" id="7L3L"/>
    </source>
</evidence>
<feature type="chain" id="PRO_0000056405" description="TNF receptor-associated factor 5">
    <location>
        <begin position="1"/>
        <end position="557"/>
    </location>
</feature>
<feature type="domain" description="MATH" evidence="3">
    <location>
        <begin position="403"/>
        <end position="549"/>
    </location>
</feature>
<feature type="zinc finger region" description="RING-type" evidence="4">
    <location>
        <begin position="45"/>
        <end position="85"/>
    </location>
</feature>
<feature type="zinc finger region" description="TRAF-type 1" evidence="5">
    <location>
        <begin position="127"/>
        <end position="181"/>
    </location>
</feature>
<feature type="zinc finger region" description="TRAF-type 2" evidence="5">
    <location>
        <begin position="182"/>
        <end position="239"/>
    </location>
</feature>
<feature type="region of interest" description="Interaction with EIF2AK2/PKR" evidence="11">
    <location>
        <begin position="345"/>
        <end position="557"/>
    </location>
</feature>
<feature type="coiled-coil region" evidence="2">
    <location>
        <begin position="237"/>
        <end position="342"/>
    </location>
</feature>
<feature type="cross-link" description="Glycyl lysine isopeptide (Lys-Gly) (interchain with G-Cter in ubiquitin)" evidence="1">
    <location>
        <position position="318"/>
    </location>
</feature>
<feature type="splice variant" id="VSP_055449" description="In isoform 2." evidence="22">
    <original>Q</original>
    <variation>QQVPLACCYLLQ</variation>
    <location>
        <position position="126"/>
    </location>
</feature>
<feature type="splice variant" id="VSP_055450" description="In isoform 3." evidence="22">
    <location>
        <begin position="127"/>
        <end position="232"/>
    </location>
</feature>
<feature type="sequence variant" id="VAR_052151" description="In dbSNP:rs3946808.">
    <original>V</original>
    <variation>G</variation>
    <location>
        <position position="120"/>
    </location>
</feature>
<feature type="sequence variant" id="VAR_020117" description="In dbSNP:rs2271458.">
    <original>N</original>
    <variation>H</variation>
    <location>
        <position position="186"/>
    </location>
</feature>
<feature type="sequence variant" id="VAR_071060" description="In dbSNP:rs200398415." evidence="10">
    <original>H</original>
    <variation>Y</variation>
    <location>
        <position position="268"/>
    </location>
</feature>
<feature type="sequence variant" id="VAR_052152" description="In dbSNP:rs2230780.">
    <original>L</original>
    <variation>V</variation>
    <location>
        <position position="358"/>
    </location>
</feature>
<feature type="strand" evidence="25">
    <location>
        <begin position="35"/>
        <end position="37"/>
    </location>
</feature>
<feature type="helix" evidence="25">
    <location>
        <begin position="41"/>
        <end position="43"/>
    </location>
</feature>
<feature type="turn" evidence="25">
    <location>
        <begin position="46"/>
        <end position="48"/>
    </location>
</feature>
<feature type="helix" evidence="25">
    <location>
        <begin position="66"/>
        <end position="74"/>
    </location>
</feature>
<feature type="strand" evidence="25">
    <location>
        <begin position="75"/>
        <end position="78"/>
    </location>
</feature>
<feature type="turn" evidence="25">
    <location>
        <begin position="82"/>
        <end position="84"/>
    </location>
</feature>
<feature type="helix" evidence="25">
    <location>
        <begin position="90"/>
        <end position="92"/>
    </location>
</feature>
<feature type="helix" evidence="25">
    <location>
        <begin position="97"/>
        <end position="104"/>
    </location>
</feature>
<feature type="strand" evidence="25">
    <location>
        <begin position="107"/>
        <end position="109"/>
    </location>
</feature>
<feature type="turn" evidence="25">
    <location>
        <begin position="113"/>
        <end position="115"/>
    </location>
</feature>
<feature type="strand" evidence="25">
    <location>
        <begin position="119"/>
        <end position="121"/>
    </location>
</feature>
<feature type="helix" evidence="25">
    <location>
        <begin position="122"/>
        <end position="124"/>
    </location>
</feature>
<feature type="helix" evidence="25">
    <location>
        <begin position="125"/>
        <end position="129"/>
    </location>
</feature>
<feature type="strand" evidence="25">
    <location>
        <begin position="140"/>
        <end position="143"/>
    </location>
</feature>
<feature type="helix" evidence="25">
    <location>
        <begin position="150"/>
        <end position="153"/>
    </location>
</feature>
<feature type="helix" evidence="25">
    <location>
        <begin position="156"/>
        <end position="160"/>
    </location>
</feature>
<accession>O00463</accession>
<accession>B4DIS9</accession>
<accession>B4E0A2</accession>
<accession>Q6FHY1</accession>
<comment type="function">
    <text evidence="11">Adapter protein and signal transducer that links members of the tumor necrosis factor receptor family to different signaling pathways by association with the receptor cytoplasmic domain and kinases. Mediates activation of NF-kappa-B and probably JNK. Seems to be involved in apoptosis. Plays a role in mediating activation of NF-kappa-B by EIF2AK2/PKR.</text>
</comment>
<comment type="subunit">
    <text evidence="6 7 8 9 11 12 13 14 15 16 17 18 19 20 21 23">Homotrimer (Probable). Heteromer with TRAF3. Associates with TNFRSF5/CD40 through interaction with TRAF3. Associates with LTBR/TNFRSF3, TNFRSF4, TNFRSF8/CD30, TNFRSF11A/RANK, TNFRSF13B/TACI, TNFRSF14, TNFRSF17, TNFRSF19/TROY, RIPK2, MAP3K14, MAP3K5, and TRAF and TNF receptor associated protein TDP2. Interacts (via C-terminus) with EIF2AK2/PKR (via the kinase catalytic domain).</text>
</comment>
<comment type="interaction">
    <interactant intactId="EBI-523498">
        <id>O00463</id>
    </interactant>
    <interactant intactId="EBI-10179526">
        <id>Q52MB2</id>
        <label>CCDC184</label>
    </interactant>
    <organismsDiffer>false</organismsDiffer>
    <experiments>6</experiments>
</comment>
<comment type="interaction">
    <interactant intactId="EBI-523498">
        <id>O00463</id>
    </interactant>
    <interactant intactId="EBI-295634">
        <id>Q16543</id>
        <label>CDC37</label>
    </interactant>
    <organismsDiffer>false</organismsDiffer>
    <experiments>3</experiments>
</comment>
<comment type="interaction">
    <interactant intactId="EBI-523498">
        <id>O00463</id>
    </interactant>
    <interactant intactId="EBI-10292696">
        <id>Q96Q77</id>
        <label>CIB3</label>
    </interactant>
    <organismsDiffer>false</organismsDiffer>
    <experiments>3</experiments>
</comment>
<comment type="interaction">
    <interactant intactId="EBI-523498">
        <id>O00463</id>
    </interactant>
    <interactant intactId="EBI-10179508">
        <id>Q16206-2</id>
        <label>ENOX2</label>
    </interactant>
    <organismsDiffer>false</organismsDiffer>
    <experiments>3</experiments>
</comment>
<comment type="interaction">
    <interactant intactId="EBI-523498">
        <id>O00463</id>
    </interactant>
    <interactant intactId="EBI-8468186">
        <id>Q8IZU1</id>
        <label>FAM9A</label>
    </interactant>
    <organismsDiffer>false</organismsDiffer>
    <experiments>3</experiments>
</comment>
<comment type="interaction">
    <interactant intactId="EBI-523498">
        <id>O00463</id>
    </interactant>
    <interactant intactId="EBI-740282">
        <id>Q9NVF7</id>
        <label>FBXO28</label>
    </interactant>
    <organismsDiffer>false</organismsDiffer>
    <experiments>6</experiments>
</comment>
<comment type="interaction">
    <interactant intactId="EBI-523498">
        <id>O00463</id>
    </interactant>
    <interactant intactId="EBI-1052570">
        <id>O95995</id>
        <label>GAS8</label>
    </interactant>
    <organismsDiffer>false</organismsDiffer>
    <experiments>3</experiments>
</comment>
<comment type="interaction">
    <interactant intactId="EBI-523498">
        <id>O00463</id>
    </interactant>
    <interactant intactId="EBI-739467">
        <id>Q9H8Y8</id>
        <label>GORASP2</label>
    </interactant>
    <organismsDiffer>false</organismsDiffer>
    <experiments>3</experiments>
</comment>
<comment type="interaction">
    <interactant intactId="EBI-523498">
        <id>O00463</id>
    </interactant>
    <interactant intactId="EBI-746815">
        <id>Q86YM7</id>
        <label>HOMER1</label>
    </interactant>
    <organismsDiffer>false</organismsDiffer>
    <experiments>5</experiments>
</comment>
<comment type="interaction">
    <interactant intactId="EBI-523498">
        <id>O00463</id>
    </interactant>
    <interactant intactId="EBI-7116203">
        <id>O75031</id>
        <label>HSF2BP</label>
    </interactant>
    <organismsDiffer>false</organismsDiffer>
    <experiments>3</experiments>
</comment>
<comment type="interaction">
    <interactant intactId="EBI-523498">
        <id>O00463</id>
    </interactant>
    <interactant intactId="EBI-21591415">
        <id>P13473-2</id>
        <label>LAMP2</label>
    </interactant>
    <organismsDiffer>false</organismsDiffer>
    <experiments>3</experiments>
</comment>
<comment type="interaction">
    <interactant intactId="EBI-523498">
        <id>O00463</id>
    </interactant>
    <interactant intactId="EBI-2798728">
        <id>P61968</id>
        <label>LMO4</label>
    </interactant>
    <organismsDiffer>false</organismsDiffer>
    <experiments>3</experiments>
</comment>
<comment type="interaction">
    <interactant intactId="EBI-523498">
        <id>O00463</id>
    </interactant>
    <interactant intactId="EBI-739832">
        <id>Q8TBB1</id>
        <label>LNX1</label>
    </interactant>
    <organismsDiffer>false</organismsDiffer>
    <experiments>3</experiments>
</comment>
<comment type="interaction">
    <interactant intactId="EBI-523498">
        <id>O00463</id>
    </interactant>
    <interactant intactId="EBI-16439278">
        <id>Q6FHY5</id>
        <label>MEOX2</label>
    </interactant>
    <organismsDiffer>false</organismsDiffer>
    <experiments>3</experiments>
</comment>
<comment type="interaction">
    <interactant intactId="EBI-523498">
        <id>O00463</id>
    </interactant>
    <interactant intactId="EBI-372942">
        <id>Q13287</id>
        <label>NMI</label>
    </interactant>
    <organismsDiffer>false</organismsDiffer>
    <experiments>12</experiments>
</comment>
<comment type="interaction">
    <interactant intactId="EBI-523498">
        <id>O00463</id>
    </interactant>
    <interactant intactId="EBI-741158">
        <id>Q96HA8</id>
        <label>NTAQ1</label>
    </interactant>
    <organismsDiffer>false</organismsDiffer>
    <experiments>3</experiments>
</comment>
<comment type="interaction">
    <interactant intactId="EBI-523498">
        <id>O00463</id>
    </interactant>
    <interactant intactId="EBI-9090919">
        <id>Q5BJF6-2</id>
        <label>ODF2</label>
    </interactant>
    <organismsDiffer>false</organismsDiffer>
    <experiments>3</experiments>
</comment>
<comment type="interaction">
    <interactant intactId="EBI-523498">
        <id>O00463</id>
    </interactant>
    <interactant intactId="EBI-721853">
        <id>O14832</id>
        <label>PHYH</label>
    </interactant>
    <organismsDiffer>false</organismsDiffer>
    <experiments>3</experiments>
</comment>
<comment type="interaction">
    <interactant intactId="EBI-523498">
        <id>O00463</id>
    </interactant>
    <interactant intactId="EBI-348567">
        <id>O75928-2</id>
        <label>PIAS2</label>
    </interactant>
    <organismsDiffer>false</organismsDiffer>
    <experiments>3</experiments>
</comment>
<comment type="interaction">
    <interactant intactId="EBI-523498">
        <id>O00463</id>
    </interactant>
    <interactant intactId="EBI-14066006">
        <id>Q4G0R1</id>
        <label>PIBF1</label>
    </interactant>
    <organismsDiffer>false</organismsDiffer>
    <experiments>3</experiments>
</comment>
<comment type="interaction">
    <interactant intactId="EBI-523498">
        <id>O00463</id>
    </interactant>
    <interactant intactId="EBI-79165">
        <id>Q9NRD5</id>
        <label>PICK1</label>
    </interactant>
    <organismsDiffer>false</organismsDiffer>
    <experiments>3</experiments>
</comment>
<comment type="interaction">
    <interactant intactId="EBI-523498">
        <id>O00463</id>
    </interactant>
    <interactant intactId="EBI-359352">
        <id>P25786</id>
        <label>PSMA1</label>
    </interactant>
    <organismsDiffer>false</organismsDiffer>
    <experiments>3</experiments>
</comment>
<comment type="interaction">
    <interactant intactId="EBI-523498">
        <id>O00463</id>
    </interactant>
    <interactant intactId="EBI-746453">
        <id>P54725</id>
        <label>RAD23A</label>
    </interactant>
    <organismsDiffer>false</organismsDiffer>
    <experiments>3</experiments>
</comment>
<comment type="interaction">
    <interactant intactId="EBI-523498">
        <id>O00463</id>
    </interactant>
    <interactant intactId="EBI-2340927">
        <id>P78317</id>
        <label>RNF4</label>
    </interactant>
    <organismsDiffer>false</organismsDiffer>
    <experiments>5</experiments>
</comment>
<comment type="interaction">
    <interactant intactId="EBI-523498">
        <id>O00463</id>
    </interactant>
    <interactant intactId="EBI-727004">
        <id>O00560</id>
        <label>SDCBP</label>
    </interactant>
    <organismsDiffer>false</organismsDiffer>
    <experiments>8</experiments>
</comment>
<comment type="interaction">
    <interactant intactId="EBI-523498">
        <id>O00463</id>
    </interactant>
    <interactant intactId="EBI-1046596">
        <id>P55735</id>
        <label>SEC13</label>
    </interactant>
    <organismsDiffer>false</organismsDiffer>
    <experiments>3</experiments>
</comment>
<comment type="interaction">
    <interactant intactId="EBI-523498">
        <id>O00463</id>
    </interactant>
    <interactant intactId="EBI-12235008">
        <id>P55735-3</id>
        <label>SEC13</label>
    </interactant>
    <organismsDiffer>false</organismsDiffer>
    <experiments>3</experiments>
</comment>
<comment type="interaction">
    <interactant intactId="EBI-523498">
        <id>O00463</id>
    </interactant>
    <interactant intactId="EBI-711626">
        <id>P50453</id>
        <label>SERPINB9</label>
    </interactant>
    <organismsDiffer>false</organismsDiffer>
    <experiments>6</experiments>
</comment>
<comment type="interaction">
    <interactant intactId="EBI-523498">
        <id>O00463</id>
    </interactant>
    <interactant intactId="EBI-5235340">
        <id>Q7Z699</id>
        <label>SPRED1</label>
    </interactant>
    <organismsDiffer>false</organismsDiffer>
    <experiments>3</experiments>
</comment>
<comment type="interaction">
    <interactant intactId="EBI-523498">
        <id>O00463</id>
    </interactant>
    <interactant intactId="EBI-398920">
        <id>Q07955</id>
        <label>SRSF1</label>
    </interactant>
    <organismsDiffer>false</organismsDiffer>
    <experiments>2</experiments>
</comment>
<comment type="interaction">
    <interactant intactId="EBI-523498">
        <id>O00463</id>
    </interactant>
    <interactant intactId="EBI-1054052">
        <id>P31948</id>
        <label>STIP1</label>
    </interactant>
    <organismsDiffer>false</organismsDiffer>
    <experiments>3</experiments>
</comment>
<comment type="interaction">
    <interactant intactId="EBI-523498">
        <id>O00463</id>
    </interactant>
    <interactant intactId="EBI-80140">
        <id>P63165</id>
        <label>SUMO1</label>
    </interactant>
    <organismsDiffer>false</organismsDiffer>
    <experiments>3</experiments>
</comment>
<comment type="interaction">
    <interactant intactId="EBI-523498">
        <id>O00463</id>
    </interactant>
    <interactant intactId="EBI-741515">
        <id>Q9NVV9</id>
        <label>THAP1</label>
    </interactant>
    <organismsDiffer>false</organismsDiffer>
    <experiments>6</experiments>
</comment>
<comment type="interaction">
    <interactant intactId="EBI-523498">
        <id>O00463</id>
    </interactant>
    <interactant intactId="EBI-741350">
        <id>Q9BT49</id>
        <label>THAP7</label>
    </interactant>
    <organismsDiffer>false</organismsDiffer>
    <experiments>3</experiments>
</comment>
<comment type="interaction">
    <interactant intactId="EBI-523498">
        <id>O00463</id>
    </interactant>
    <interactant intactId="EBI-1056653">
        <id>Q92956</id>
        <label>TNFRSF14</label>
    </interactant>
    <organismsDiffer>false</organismsDiffer>
    <experiments>5</experiments>
</comment>
<comment type="interaction">
    <interactant intactId="EBI-523498">
        <id>O00463</id>
    </interactant>
    <interactant intactId="EBI-355744">
        <id>Q12933</id>
        <label>TRAF2</label>
    </interactant>
    <organismsDiffer>false</organismsDiffer>
    <experiments>5</experiments>
</comment>
<comment type="interaction">
    <interactant intactId="EBI-523498">
        <id>O00463</id>
    </interactant>
    <interactant intactId="EBI-357631">
        <id>Q13114</id>
        <label>TRAF3</label>
    </interactant>
    <organismsDiffer>false</organismsDiffer>
    <experiments>4</experiments>
</comment>
<comment type="interaction">
    <interactant intactId="EBI-523498">
        <id>O00463</id>
    </interactant>
    <interactant intactId="EBI-523498">
        <id>O00463</id>
        <label>TRAF5</label>
    </interactant>
    <organismsDiffer>false</organismsDiffer>
    <experiments>5</experiments>
</comment>
<comment type="interaction">
    <interactant intactId="EBI-523498">
        <id>O00463</id>
    </interactant>
    <interactant intactId="EBI-359276">
        <id>Q9Y4K3</id>
        <label>TRAF6</label>
    </interactant>
    <organismsDiffer>false</organismsDiffer>
    <experiments>15</experiments>
</comment>
<comment type="interaction">
    <interactant intactId="EBI-523498">
        <id>O00463</id>
    </interactant>
    <interactant intactId="EBI-11721624">
        <id>P62699</id>
        <label>YPEL5</label>
    </interactant>
    <organismsDiffer>false</organismsDiffer>
    <experiments>3</experiments>
</comment>
<comment type="interaction">
    <interactant intactId="EBI-523498">
        <id>O00463</id>
    </interactant>
    <interactant intactId="EBI-724630">
        <id>Q6FIF0</id>
        <label>ZFAND6</label>
    </interactant>
    <organismsDiffer>false</organismsDiffer>
    <experiments>3</experiments>
</comment>
<comment type="interaction">
    <interactant intactId="EBI-523498">
        <id>O00463</id>
    </interactant>
    <interactant intactId="EBI-625509">
        <id>Q8N720</id>
        <label>ZNF655</label>
    </interactant>
    <organismsDiffer>false</organismsDiffer>
    <experiments>3</experiments>
</comment>
<comment type="subcellular location">
    <subcellularLocation>
        <location evidence="24">Cytoplasm</location>
    </subcellularLocation>
    <subcellularLocation>
        <location evidence="11">Cytoplasm</location>
        <location evidence="11">Cytosol</location>
    </subcellularLocation>
</comment>
<comment type="alternative products">
    <event type="alternative splicing"/>
    <isoform>
        <id>O00463-1</id>
        <name>1</name>
        <sequence type="displayed"/>
    </isoform>
    <isoform>
        <id>O00463-2</id>
        <name>2</name>
        <sequence type="described" ref="VSP_055449"/>
    </isoform>
    <isoform>
        <id>O00463-3</id>
        <name>3</name>
        <sequence type="described" ref="VSP_055450"/>
    </isoform>
</comment>
<comment type="tissue specificity">
    <text>Expressed in spleen, thymus, prostate, testis, ovary, small intestine, colon, and peripheral blood.</text>
</comment>
<comment type="domain">
    <text>The MATH/TRAF domain binds to receptor cytoplasmic domains.</text>
</comment>
<comment type="PTM">
    <text evidence="1">Ubiquitinated at Lys-318 by the SCF(FBXL2) complex, leading to its degradation by the proteasome.</text>
</comment>
<comment type="similarity">
    <text evidence="23">Belongs to the TNF receptor-associated factor family. A subfamily.</text>
</comment>
<proteinExistence type="evidence at protein level"/>